<organism>
    <name type="scientific">Euglena gracilis</name>
    <dbReference type="NCBI Taxonomy" id="3039"/>
    <lineage>
        <taxon>Eukaryota</taxon>
        <taxon>Discoba</taxon>
        <taxon>Euglenozoa</taxon>
        <taxon>Euglenida</taxon>
        <taxon>Spirocuta</taxon>
        <taxon>Euglenophyceae</taxon>
        <taxon>Euglenales</taxon>
        <taxon>Euglenaceae</taxon>
        <taxon>Euglena</taxon>
    </lineage>
</organism>
<comment type="subcellular location">
    <subcellularLocation>
        <location>Plastid</location>
        <location>Chloroplast</location>
    </subcellularLocation>
</comment>
<protein>
    <recommendedName>
        <fullName>Uncharacterized 46.2 kDa protein in 16S rRNA 5'region</fullName>
    </recommendedName>
    <alternativeName>
        <fullName>ORF406</fullName>
    </alternativeName>
</protein>
<accession>P05729</accession>
<dbReference type="EMBL" id="Z11874">
    <property type="status" value="NOT_ANNOTATED_CDS"/>
    <property type="molecule type" value="Genomic_DNA"/>
</dbReference>
<dbReference type="EMBL" id="X05005">
    <property type="protein sequence ID" value="CAA28658.1"/>
    <property type="molecule type" value="Genomic_DNA"/>
</dbReference>
<dbReference type="EMBL" id="X70810">
    <property type="protein sequence ID" value="CAA50139.1"/>
    <property type="molecule type" value="Genomic_DNA"/>
</dbReference>
<dbReference type="PIR" id="S07164">
    <property type="entry name" value="S07164"/>
</dbReference>
<dbReference type="RefSeq" id="NP_041952.1">
    <property type="nucleotide sequence ID" value="NC_001603.2"/>
</dbReference>
<dbReference type="GeneID" id="1457330"/>
<dbReference type="GO" id="GO:0009507">
    <property type="term" value="C:chloroplast"/>
    <property type="evidence" value="ECO:0007669"/>
    <property type="project" value="UniProtKB-SubCell"/>
</dbReference>
<geneLocation type="chloroplast"/>
<sequence length="406" mass="46160">MFLNGFLRRLTRKIKQHGYAFFVVSVDGIATGVKGSVKGSFSVASLDPMVMENIEKCAILHNEDPHIAYPHEQPFALPRKGKAKSVKGFAKSMKGKAKENSKPKDILFPTFLDYSSQTAYIASILLNKYRIETFLLQNMAHLYRELIPCFDYDSWECVADALREKANEIFEANISRNLMLLILTGLYDNLVPHHQQEVFNKASNKFLKELEEKMDTSDPRVVIFLICLTMVLCAGGGFFSCKRHSNKKRSKASYTPPVPDNYAIFNDLGKYKAKVPVFEWQNAHAHSLGIMPLPPNLVNEMSSEEIKEAILEVPKEAAKGLVYGIPHFLIGSVVNSFTGVKYILMRVGTVVFFTIAGPFILLDYVKDRVREYYWFVTRNFSNFREFLFHAITSLLSLFPGGKMFQE</sequence>
<name>YCX9_EUGGR</name>
<keyword id="KW-0150">Chloroplast</keyword>
<keyword id="KW-0934">Plastid</keyword>
<feature type="chain" id="PRO_0000217440" description="Uncharacterized 46.2 kDa protein in 16S rRNA 5'region">
    <location>
        <begin position="1"/>
        <end position="406"/>
    </location>
</feature>
<reference key="1">
    <citation type="journal article" date="1985" name="Curr. Genet.">
        <title>The chloroplast genome of Euglena gracilis: the mosaic structure of a DNA segment linking the extra 16S rRNA gene with the rrn operon A.</title>
        <authorList>
            <person name="Roux E."/>
            <person name="Stutz E."/>
        </authorList>
    </citation>
    <scope>NUCLEOTIDE SEQUENCE [GENOMIC DNA]</scope>
    <source>
        <strain>Z / UTEX 753</strain>
    </source>
</reference>
<reference key="2">
    <citation type="journal article" date="1993" name="Nucleic Acids Res.">
        <title>Complete sequence of Euglena gracilis chloroplast DNA.</title>
        <authorList>
            <person name="Hallick R.B."/>
            <person name="Hong L."/>
            <person name="Drager R.G."/>
            <person name="Favreau M.R."/>
            <person name="Monfort A."/>
            <person name="Orsat B."/>
            <person name="Spielmann A."/>
            <person name="Stutz E."/>
        </authorList>
    </citation>
    <scope>NUCLEOTIDE SEQUENCE [LARGE SCALE GENOMIC DNA]</scope>
    <source>
        <strain>Z / UTEX 753</strain>
    </source>
</reference>
<proteinExistence type="predicted"/>